<evidence type="ECO:0000250" key="1"/>
<evidence type="ECO:0000269" key="2">
    <source>
    </source>
</evidence>
<evidence type="ECO:0000305" key="3"/>
<sequence>GFRDVLKGAAKQFVKTVAGHIANI</sequence>
<comment type="function">
    <text evidence="1">Antimicrobial peptide that shows higher potency against Gram-negative bacteria than against Gram-positive bacteria. Has a very week hemolytic activity (By similarity).</text>
</comment>
<comment type="subcellular location">
    <subcellularLocation>
        <location>Secreted</location>
    </subcellularLocation>
</comment>
<comment type="tissue specificity">
    <text>Expressed by the skin glands.</text>
</comment>
<comment type="mass spectrometry"/>
<comment type="similarity">
    <text evidence="3">Belongs to the ascaphin family.</text>
</comment>
<organism>
    <name type="scientific">Ascaphus truei</name>
    <name type="common">Coastal tailed frog</name>
    <dbReference type="NCBI Taxonomy" id="8439"/>
    <lineage>
        <taxon>Eukaryota</taxon>
        <taxon>Metazoa</taxon>
        <taxon>Chordata</taxon>
        <taxon>Craniata</taxon>
        <taxon>Vertebrata</taxon>
        <taxon>Euteleostomi</taxon>
        <taxon>Amphibia</taxon>
        <taxon>Batrachia</taxon>
        <taxon>Anura</taxon>
        <taxon>Ascaphidae</taxon>
        <taxon>Ascaphus</taxon>
    </lineage>
</organism>
<protein>
    <recommendedName>
        <fullName>Ascaphin-2</fullName>
    </recommendedName>
</protein>
<reference key="1">
    <citation type="journal article" date="2004" name="Biochem. Biophys. Res. Commun.">
        <title>The ascaphins: a family of antimicrobial peptides from the skin secretions of the most primitive extant frog, Ascaphus truei.</title>
        <authorList>
            <person name="Conlon J.M."/>
            <person name="Sonnevend A."/>
            <person name="Davidson C."/>
            <person name="Smith D.D."/>
            <person name="Nielsen P.F."/>
        </authorList>
    </citation>
    <scope>PROTEIN SEQUENCE</scope>
    <scope>MASS SPECTROMETRY</scope>
    <source>
        <tissue>Skin secretion</tissue>
    </source>
</reference>
<dbReference type="GO" id="GO:0005576">
    <property type="term" value="C:extracellular region"/>
    <property type="evidence" value="ECO:0000250"/>
    <property type="project" value="UniProtKB"/>
</dbReference>
<dbReference type="GO" id="GO:0050829">
    <property type="term" value="P:defense response to Gram-negative bacterium"/>
    <property type="evidence" value="ECO:0000250"/>
    <property type="project" value="UniProtKB"/>
</dbReference>
<name>ASCA2_ASCTR</name>
<proteinExistence type="evidence at protein level"/>
<accession>P0CJ26</accession>
<keyword id="KW-0878">Amphibian defense peptide</keyword>
<keyword id="KW-0044">Antibiotic</keyword>
<keyword id="KW-0929">Antimicrobial</keyword>
<keyword id="KW-0903">Direct protein sequencing</keyword>
<keyword id="KW-0964">Secreted</keyword>
<feature type="peptide" id="PRO_0000406129" description="Ascaphin-2">
    <location>
        <begin position="1"/>
        <end position="24"/>
    </location>
</feature>